<feature type="chain" id="PRO_1000086377" description="DNA-directed RNA polymerase subunit beta">
    <location>
        <begin position="1"/>
        <end position="1357"/>
    </location>
</feature>
<organism>
    <name type="scientific">Pseudomonas putida (strain GB-1)</name>
    <dbReference type="NCBI Taxonomy" id="76869"/>
    <lineage>
        <taxon>Bacteria</taxon>
        <taxon>Pseudomonadati</taxon>
        <taxon>Pseudomonadota</taxon>
        <taxon>Gammaproteobacteria</taxon>
        <taxon>Pseudomonadales</taxon>
        <taxon>Pseudomonadaceae</taxon>
        <taxon>Pseudomonas</taxon>
    </lineage>
</organism>
<protein>
    <recommendedName>
        <fullName evidence="1">DNA-directed RNA polymerase subunit beta</fullName>
        <shortName evidence="1">RNAP subunit beta</shortName>
        <ecNumber evidence="1">2.7.7.6</ecNumber>
    </recommendedName>
    <alternativeName>
        <fullName evidence="1">RNA polymerase subunit beta</fullName>
    </alternativeName>
    <alternativeName>
        <fullName evidence="1">Transcriptase subunit beta</fullName>
    </alternativeName>
</protein>
<keyword id="KW-0240">DNA-directed RNA polymerase</keyword>
<keyword id="KW-0548">Nucleotidyltransferase</keyword>
<keyword id="KW-0804">Transcription</keyword>
<keyword id="KW-0808">Transferase</keyword>
<reference key="1">
    <citation type="submission" date="2008-01" db="EMBL/GenBank/DDBJ databases">
        <title>Complete sequence of Pseudomonas putida GB-1.</title>
        <authorList>
            <consortium name="US DOE Joint Genome Institute"/>
            <person name="Copeland A."/>
            <person name="Lucas S."/>
            <person name="Lapidus A."/>
            <person name="Barry K."/>
            <person name="Glavina del Rio T."/>
            <person name="Dalin E."/>
            <person name="Tice H."/>
            <person name="Pitluck S."/>
            <person name="Bruce D."/>
            <person name="Goodwin L."/>
            <person name="Chertkov O."/>
            <person name="Brettin T."/>
            <person name="Detter J.C."/>
            <person name="Han C."/>
            <person name="Kuske C.R."/>
            <person name="Schmutz J."/>
            <person name="Larimer F."/>
            <person name="Land M."/>
            <person name="Hauser L."/>
            <person name="Kyrpides N."/>
            <person name="Kim E."/>
            <person name="McCarthy J.K."/>
            <person name="Richardson P."/>
        </authorList>
    </citation>
    <scope>NUCLEOTIDE SEQUENCE [LARGE SCALE GENOMIC DNA]</scope>
    <source>
        <strain>GB-1</strain>
    </source>
</reference>
<gene>
    <name evidence="1" type="primary">rpoB</name>
    <name type="ordered locus">PputGB1_0477</name>
</gene>
<sequence>MAYSYTEKKRIRKDFSKLPDVMDVPYLLAIQLDSYREFLQAGASKDHFRDVGLHAAFKSVFPIISYSGNAALEYVGYRLGEPAFDVKECVLRGVTFAVPLRVKVRLIIFDKESSNKAIKDIKEQEVYMGEIPLMTENGTFVINGTERVIVSQLHRSPGVFFDHDRGKTHSSGKLLYSARIIPYRGSWLDFEFDPKDCVFVRIDRRRKLPASVLLRALGYSTEEVLNTFYTTNVFHISGEKLSLELVPQRLRGEVAVMDIHDETGKVIVEQGRRITARHINQLEKAGVKQLDVPMEYVLGRTTAKAIVHPATGEILAECNTEMTTELLIKVAKAQVVRIETLYTNDIDCGPFISDTLKIDTTSNQLEALVEIYRMMRPGEPPTKDAAETLFNNLFFSAERYDLSAVGRMKFNRRIGRTEIEGSGVLSKEDIVEVLKTLVDIRNGKGIVDDIDHLGNRRVRCVGEMAENQFRVGLVRVERAVKERLSMAESEGLMPQDLINAKPVAAAVKEFFGSSQLSQFMDQNNPLSEITHKRRVSALGPGGLTRERAGFEVRDVHPTHYGRVCPIETPEGPNIGLINSLAAYARTNQYGFLESPYRVVKEGVVSDDIVFLSAIEEADHVIAQASAAMNEKKQLIDELVAVRHLNEFTVKAPEDVTLMDVSPKQVVSVAASLIPFLEHDDANRALMGSNMQRQAVPTLRADKPLVGTGMERNVARDSGVCVVARRGGVIDSVDASRIVVRVNDDEVETGEAGVDIYNLTKYTRSNQNTCINQRPLVSKGDKVQRSDIMADGPSTDMGELALGQNMRIAFMAWNGFNFEDSICLSERVVQEDRFTTIHIQELTCVARDTKLGPEEITADIPNVGEAALNKLDEAGIVYVGAEVGAGDILVGKVTPKGETQLTPEEKLLRAIFGEKASDVKDTSLRVPTGTKGTVIDVQVFTRDGVERDSRALAIEKMQLDEIRKDLNEEFRIVEGATFERLRSALNGQVVDGGAGLKKGTVITDEVLDGLEHGQWFKLRMAEDALNEQLEKAQQYIVDRRRLLDDKFEDKKRKLQQGDDLAPGVLKIVKVYLAIRRRIQPGDKMAGRHGNKGVVSVIMPVEDMPHDANGTPVDVVLNPLGVPSRMNVGQILETHLGLAAKGLGEKIDRMLEEQRKAAELRVFLTEVYNEIGGRQENLDEFTDEEILALANNLKKGVPMATPVFDGAKEREIKAMLKLADLPESGQMVLFDGRTGNKFERPVTVGYMYMLKLNHLVDDKMHARSTGSYSLVTQQPLGGKAQFGGQRFGEMEVWALEAYGAAYTLQEMLTVKSDDVNGRTKMYKNIVDGDHRMEPGMPESFNVLIKEIRSLGIDIDLETE</sequence>
<accession>B0KK60</accession>
<evidence type="ECO:0000255" key="1">
    <source>
        <dbReference type="HAMAP-Rule" id="MF_01321"/>
    </source>
</evidence>
<dbReference type="EC" id="2.7.7.6" evidence="1"/>
<dbReference type="EMBL" id="CP000926">
    <property type="protein sequence ID" value="ABY96388.1"/>
    <property type="molecule type" value="Genomic_DNA"/>
</dbReference>
<dbReference type="RefSeq" id="WP_012270233.1">
    <property type="nucleotide sequence ID" value="NC_010322.1"/>
</dbReference>
<dbReference type="SMR" id="B0KK60"/>
<dbReference type="KEGG" id="ppg:PputGB1_0477"/>
<dbReference type="eggNOG" id="COG0085">
    <property type="taxonomic scope" value="Bacteria"/>
</dbReference>
<dbReference type="HOGENOM" id="CLU_000524_4_0_6"/>
<dbReference type="Proteomes" id="UP000002157">
    <property type="component" value="Chromosome"/>
</dbReference>
<dbReference type="GO" id="GO:0000428">
    <property type="term" value="C:DNA-directed RNA polymerase complex"/>
    <property type="evidence" value="ECO:0007669"/>
    <property type="project" value="UniProtKB-KW"/>
</dbReference>
<dbReference type="GO" id="GO:0003677">
    <property type="term" value="F:DNA binding"/>
    <property type="evidence" value="ECO:0007669"/>
    <property type="project" value="UniProtKB-UniRule"/>
</dbReference>
<dbReference type="GO" id="GO:0003899">
    <property type="term" value="F:DNA-directed RNA polymerase activity"/>
    <property type="evidence" value="ECO:0007669"/>
    <property type="project" value="UniProtKB-UniRule"/>
</dbReference>
<dbReference type="GO" id="GO:0032549">
    <property type="term" value="F:ribonucleoside binding"/>
    <property type="evidence" value="ECO:0007669"/>
    <property type="project" value="InterPro"/>
</dbReference>
<dbReference type="GO" id="GO:0006351">
    <property type="term" value="P:DNA-templated transcription"/>
    <property type="evidence" value="ECO:0007669"/>
    <property type="project" value="UniProtKB-UniRule"/>
</dbReference>
<dbReference type="CDD" id="cd00653">
    <property type="entry name" value="RNA_pol_B_RPB2"/>
    <property type="match status" value="1"/>
</dbReference>
<dbReference type="FunFam" id="2.40.50.100:FF:000006">
    <property type="entry name" value="DNA-directed RNA polymerase subunit beta"/>
    <property type="match status" value="1"/>
</dbReference>
<dbReference type="FunFam" id="2.40.50.150:FF:000001">
    <property type="entry name" value="DNA-directed RNA polymerase subunit beta"/>
    <property type="match status" value="1"/>
</dbReference>
<dbReference type="FunFam" id="3.90.1110.10:FF:000001">
    <property type="entry name" value="DNA-directed RNA polymerase subunit beta"/>
    <property type="match status" value="1"/>
</dbReference>
<dbReference type="FunFam" id="3.90.1110.10:FF:000004">
    <property type="entry name" value="DNA-directed RNA polymerase subunit beta"/>
    <property type="match status" value="1"/>
</dbReference>
<dbReference type="FunFam" id="3.90.1800.10:FF:000001">
    <property type="entry name" value="DNA-directed RNA polymerase subunit beta"/>
    <property type="match status" value="1"/>
</dbReference>
<dbReference type="Gene3D" id="2.40.50.100">
    <property type="match status" value="1"/>
</dbReference>
<dbReference type="Gene3D" id="2.40.50.150">
    <property type="match status" value="1"/>
</dbReference>
<dbReference type="Gene3D" id="3.90.1100.10">
    <property type="match status" value="2"/>
</dbReference>
<dbReference type="Gene3D" id="2.30.150.10">
    <property type="entry name" value="DNA-directed RNA polymerase, beta subunit, external 1 domain"/>
    <property type="match status" value="1"/>
</dbReference>
<dbReference type="Gene3D" id="2.40.270.10">
    <property type="entry name" value="DNA-directed RNA polymerase, subunit 2, domain 6"/>
    <property type="match status" value="1"/>
</dbReference>
<dbReference type="Gene3D" id="3.90.1800.10">
    <property type="entry name" value="RNA polymerase alpha subunit dimerisation domain"/>
    <property type="match status" value="1"/>
</dbReference>
<dbReference type="Gene3D" id="3.90.1110.10">
    <property type="entry name" value="RNA polymerase Rpb2, domain 2"/>
    <property type="match status" value="1"/>
</dbReference>
<dbReference type="HAMAP" id="MF_01321">
    <property type="entry name" value="RNApol_bact_RpoB"/>
    <property type="match status" value="1"/>
</dbReference>
<dbReference type="InterPro" id="IPR042107">
    <property type="entry name" value="DNA-dir_RNA_pol_bsu_ext_1_sf"/>
</dbReference>
<dbReference type="InterPro" id="IPR019462">
    <property type="entry name" value="DNA-dir_RNA_pol_bsu_external_1"/>
</dbReference>
<dbReference type="InterPro" id="IPR015712">
    <property type="entry name" value="DNA-dir_RNA_pol_su2"/>
</dbReference>
<dbReference type="InterPro" id="IPR007120">
    <property type="entry name" value="DNA-dir_RNAP_su2_dom"/>
</dbReference>
<dbReference type="InterPro" id="IPR037033">
    <property type="entry name" value="DNA-dir_RNAP_su2_hyb_sf"/>
</dbReference>
<dbReference type="InterPro" id="IPR010243">
    <property type="entry name" value="RNA_pol_bsu_bac"/>
</dbReference>
<dbReference type="InterPro" id="IPR007121">
    <property type="entry name" value="RNA_pol_bsu_CS"/>
</dbReference>
<dbReference type="InterPro" id="IPR007644">
    <property type="entry name" value="RNA_pol_bsu_protrusion"/>
</dbReference>
<dbReference type="InterPro" id="IPR007642">
    <property type="entry name" value="RNA_pol_Rpb2_2"/>
</dbReference>
<dbReference type="InterPro" id="IPR037034">
    <property type="entry name" value="RNA_pol_Rpb2_2_sf"/>
</dbReference>
<dbReference type="InterPro" id="IPR007645">
    <property type="entry name" value="RNA_pol_Rpb2_3"/>
</dbReference>
<dbReference type="InterPro" id="IPR007641">
    <property type="entry name" value="RNA_pol_Rpb2_7"/>
</dbReference>
<dbReference type="InterPro" id="IPR014724">
    <property type="entry name" value="RNA_pol_RPB2_OB-fold"/>
</dbReference>
<dbReference type="NCBIfam" id="NF001616">
    <property type="entry name" value="PRK00405.1"/>
    <property type="match status" value="1"/>
</dbReference>
<dbReference type="NCBIfam" id="TIGR02013">
    <property type="entry name" value="rpoB"/>
    <property type="match status" value="1"/>
</dbReference>
<dbReference type="PANTHER" id="PTHR20856">
    <property type="entry name" value="DNA-DIRECTED RNA POLYMERASE I SUBUNIT 2"/>
    <property type="match status" value="1"/>
</dbReference>
<dbReference type="Pfam" id="PF04563">
    <property type="entry name" value="RNA_pol_Rpb2_1"/>
    <property type="match status" value="1"/>
</dbReference>
<dbReference type="Pfam" id="PF04561">
    <property type="entry name" value="RNA_pol_Rpb2_2"/>
    <property type="match status" value="2"/>
</dbReference>
<dbReference type="Pfam" id="PF04565">
    <property type="entry name" value="RNA_pol_Rpb2_3"/>
    <property type="match status" value="1"/>
</dbReference>
<dbReference type="Pfam" id="PF10385">
    <property type="entry name" value="RNA_pol_Rpb2_45"/>
    <property type="match status" value="1"/>
</dbReference>
<dbReference type="Pfam" id="PF00562">
    <property type="entry name" value="RNA_pol_Rpb2_6"/>
    <property type="match status" value="1"/>
</dbReference>
<dbReference type="Pfam" id="PF04560">
    <property type="entry name" value="RNA_pol_Rpb2_7"/>
    <property type="match status" value="1"/>
</dbReference>
<dbReference type="SUPFAM" id="SSF64484">
    <property type="entry name" value="beta and beta-prime subunits of DNA dependent RNA-polymerase"/>
    <property type="match status" value="1"/>
</dbReference>
<dbReference type="PROSITE" id="PS01166">
    <property type="entry name" value="RNA_POL_BETA"/>
    <property type="match status" value="1"/>
</dbReference>
<proteinExistence type="inferred from homology"/>
<name>RPOB_PSEPG</name>
<comment type="function">
    <text evidence="1">DNA-dependent RNA polymerase catalyzes the transcription of DNA into RNA using the four ribonucleoside triphosphates as substrates.</text>
</comment>
<comment type="catalytic activity">
    <reaction evidence="1">
        <text>RNA(n) + a ribonucleoside 5'-triphosphate = RNA(n+1) + diphosphate</text>
        <dbReference type="Rhea" id="RHEA:21248"/>
        <dbReference type="Rhea" id="RHEA-COMP:14527"/>
        <dbReference type="Rhea" id="RHEA-COMP:17342"/>
        <dbReference type="ChEBI" id="CHEBI:33019"/>
        <dbReference type="ChEBI" id="CHEBI:61557"/>
        <dbReference type="ChEBI" id="CHEBI:140395"/>
        <dbReference type="EC" id="2.7.7.6"/>
    </reaction>
</comment>
<comment type="subunit">
    <text evidence="1">The RNAP catalytic core consists of 2 alpha, 1 beta, 1 beta' and 1 omega subunit. When a sigma factor is associated with the core the holoenzyme is formed, which can initiate transcription.</text>
</comment>
<comment type="similarity">
    <text evidence="1">Belongs to the RNA polymerase beta chain family.</text>
</comment>